<comment type="function">
    <text evidence="1">Specifically methylates the N4 position of cytidine in position 1402 (C1402) of 16S rRNA.</text>
</comment>
<comment type="catalytic activity">
    <reaction evidence="1">
        <text>cytidine(1402) in 16S rRNA + S-adenosyl-L-methionine = N(4)-methylcytidine(1402) in 16S rRNA + S-adenosyl-L-homocysteine + H(+)</text>
        <dbReference type="Rhea" id="RHEA:42928"/>
        <dbReference type="Rhea" id="RHEA-COMP:10286"/>
        <dbReference type="Rhea" id="RHEA-COMP:10287"/>
        <dbReference type="ChEBI" id="CHEBI:15378"/>
        <dbReference type="ChEBI" id="CHEBI:57856"/>
        <dbReference type="ChEBI" id="CHEBI:59789"/>
        <dbReference type="ChEBI" id="CHEBI:74506"/>
        <dbReference type="ChEBI" id="CHEBI:82748"/>
        <dbReference type="EC" id="2.1.1.199"/>
    </reaction>
</comment>
<comment type="subcellular location">
    <subcellularLocation>
        <location evidence="1">Cytoplasm</location>
    </subcellularLocation>
</comment>
<comment type="similarity">
    <text evidence="1">Belongs to the methyltransferase superfamily. RsmH family.</text>
</comment>
<evidence type="ECO:0000255" key="1">
    <source>
        <dbReference type="HAMAP-Rule" id="MF_01007"/>
    </source>
</evidence>
<sequence>MSQEFSHLSVLLTETVAGLNIKPDGIYIDGTFGRGGHSREVLKHLGDNGRLIAIDRDPQAIIAAEQFADDARFSIVHGGFGQLADYVEDLGLKGKVDGVLLDFGVSSPQLDDAERGFSFLRDGPLDMRMDNSQGQTAAEWIARTEIEDMAWVFKTYGEEKNSRHIARCIAADRDKTPFLRTKELADLIARICKSKERNKHPATRVFQAIRIYINSELEQIDQALEGALKVLAPQGRLSVISFHSLEDRIVKRFIRRHSQGMSVPHGLPITEAEINKTRLLKAVGKATKPSTEEVEMNKRSRSSVLRVAERLEY</sequence>
<name>RSMH_SHEVD</name>
<organism>
    <name type="scientific">Shewanella violacea (strain JCM 10179 / CIP 106290 / LMG 19151 / DSS12)</name>
    <dbReference type="NCBI Taxonomy" id="637905"/>
    <lineage>
        <taxon>Bacteria</taxon>
        <taxon>Pseudomonadati</taxon>
        <taxon>Pseudomonadota</taxon>
        <taxon>Gammaproteobacteria</taxon>
        <taxon>Alteromonadales</taxon>
        <taxon>Shewanellaceae</taxon>
        <taxon>Shewanella</taxon>
    </lineage>
</organism>
<keyword id="KW-0963">Cytoplasm</keyword>
<keyword id="KW-0489">Methyltransferase</keyword>
<keyword id="KW-1185">Reference proteome</keyword>
<keyword id="KW-0698">rRNA processing</keyword>
<keyword id="KW-0949">S-adenosyl-L-methionine</keyword>
<keyword id="KW-0808">Transferase</keyword>
<reference key="1">
    <citation type="journal article" date="2002" name="J. Biochem.">
        <title>Isolation and characterization of the dcw cluster from the piezophilic deep-sea bacterium Shewanella violacea.</title>
        <authorList>
            <person name="Ishii A."/>
            <person name="Nakasone K."/>
            <person name="Sato T."/>
            <person name="Wachi M."/>
            <person name="Sugai M."/>
            <person name="Nagai K."/>
            <person name="Kato C."/>
        </authorList>
    </citation>
    <scope>NUCLEOTIDE SEQUENCE [GENOMIC DNA]</scope>
</reference>
<reference key="2">
    <citation type="journal article" date="2010" name="Mol. Biosyst.">
        <title>Complete genome sequence and comparative analysis of Shewanella violacea, a psychrophilic and piezophilic bacterium from deep sea floor sediments.</title>
        <authorList>
            <person name="Aono E."/>
            <person name="Baba T."/>
            <person name="Ara T."/>
            <person name="Nishi T."/>
            <person name="Nakamichi T."/>
            <person name="Inamoto E."/>
            <person name="Toyonaga H."/>
            <person name="Hasegawa M."/>
            <person name="Takai Y."/>
            <person name="Okumura Y."/>
            <person name="Baba M."/>
            <person name="Tomita M."/>
            <person name="Kato C."/>
            <person name="Oshima T."/>
            <person name="Nakasone K."/>
            <person name="Mori H."/>
        </authorList>
    </citation>
    <scope>NUCLEOTIDE SEQUENCE [LARGE SCALE GENOMIC DNA]</scope>
    <source>
        <strain>JCM 10179 / CIP 106290 / LMG 19151 / DSS12</strain>
    </source>
</reference>
<protein>
    <recommendedName>
        <fullName evidence="1">Ribosomal RNA small subunit methyltransferase H</fullName>
        <ecNumber evidence="1">2.1.1.199</ecNumber>
    </recommendedName>
    <alternativeName>
        <fullName evidence="1">16S rRNA m(4)C1402 methyltransferase</fullName>
    </alternativeName>
    <alternativeName>
        <fullName evidence="1">rRNA (cytosine-N(4)-)-methyltransferase RsmH</fullName>
    </alternativeName>
</protein>
<proteinExistence type="inferred from homology"/>
<dbReference type="EC" id="2.1.1.199" evidence="1"/>
<dbReference type="EMBL" id="AB052554">
    <property type="protein sequence ID" value="BAB19194.1"/>
    <property type="molecule type" value="Genomic_DNA"/>
</dbReference>
<dbReference type="EMBL" id="AP011177">
    <property type="protein sequence ID" value="BAJ04012.1"/>
    <property type="molecule type" value="Genomic_DNA"/>
</dbReference>
<dbReference type="RefSeq" id="WP_013053303.1">
    <property type="nucleotide sequence ID" value="NC_014012.1"/>
</dbReference>
<dbReference type="SMR" id="Q9F1N8"/>
<dbReference type="STRING" id="637905.SVI_4041"/>
<dbReference type="KEGG" id="svo:SVI_4041"/>
<dbReference type="eggNOG" id="COG0275">
    <property type="taxonomic scope" value="Bacteria"/>
</dbReference>
<dbReference type="HOGENOM" id="CLU_038422_2_0_6"/>
<dbReference type="OrthoDB" id="9806637at2"/>
<dbReference type="Proteomes" id="UP000002350">
    <property type="component" value="Chromosome"/>
</dbReference>
<dbReference type="GO" id="GO:0005737">
    <property type="term" value="C:cytoplasm"/>
    <property type="evidence" value="ECO:0007669"/>
    <property type="project" value="UniProtKB-SubCell"/>
</dbReference>
<dbReference type="GO" id="GO:0071424">
    <property type="term" value="F:rRNA (cytosine-N4-)-methyltransferase activity"/>
    <property type="evidence" value="ECO:0007669"/>
    <property type="project" value="UniProtKB-UniRule"/>
</dbReference>
<dbReference type="GO" id="GO:0070475">
    <property type="term" value="P:rRNA base methylation"/>
    <property type="evidence" value="ECO:0007669"/>
    <property type="project" value="UniProtKB-UniRule"/>
</dbReference>
<dbReference type="FunFam" id="1.10.150.170:FF:000001">
    <property type="entry name" value="Ribosomal RNA small subunit methyltransferase H"/>
    <property type="match status" value="1"/>
</dbReference>
<dbReference type="Gene3D" id="1.10.150.170">
    <property type="entry name" value="Putative methyltransferase TM0872, insert domain"/>
    <property type="match status" value="1"/>
</dbReference>
<dbReference type="Gene3D" id="3.40.50.150">
    <property type="entry name" value="Vaccinia Virus protein VP39"/>
    <property type="match status" value="1"/>
</dbReference>
<dbReference type="HAMAP" id="MF_01007">
    <property type="entry name" value="16SrRNA_methyltr_H"/>
    <property type="match status" value="1"/>
</dbReference>
<dbReference type="InterPro" id="IPR002903">
    <property type="entry name" value="RsmH"/>
</dbReference>
<dbReference type="InterPro" id="IPR023397">
    <property type="entry name" value="SAM-dep_MeTrfase_MraW_recog"/>
</dbReference>
<dbReference type="InterPro" id="IPR029063">
    <property type="entry name" value="SAM-dependent_MTases_sf"/>
</dbReference>
<dbReference type="NCBIfam" id="TIGR00006">
    <property type="entry name" value="16S rRNA (cytosine(1402)-N(4))-methyltransferase RsmH"/>
    <property type="match status" value="1"/>
</dbReference>
<dbReference type="PANTHER" id="PTHR11265:SF0">
    <property type="entry name" value="12S RRNA N4-METHYLCYTIDINE METHYLTRANSFERASE"/>
    <property type="match status" value="1"/>
</dbReference>
<dbReference type="PANTHER" id="PTHR11265">
    <property type="entry name" value="S-ADENOSYL-METHYLTRANSFERASE MRAW"/>
    <property type="match status" value="1"/>
</dbReference>
<dbReference type="Pfam" id="PF01795">
    <property type="entry name" value="Methyltransf_5"/>
    <property type="match status" value="1"/>
</dbReference>
<dbReference type="PIRSF" id="PIRSF004486">
    <property type="entry name" value="MraW"/>
    <property type="match status" value="1"/>
</dbReference>
<dbReference type="SUPFAM" id="SSF81799">
    <property type="entry name" value="Putative methyltransferase TM0872, insert domain"/>
    <property type="match status" value="1"/>
</dbReference>
<dbReference type="SUPFAM" id="SSF53335">
    <property type="entry name" value="S-adenosyl-L-methionine-dependent methyltransferases"/>
    <property type="match status" value="1"/>
</dbReference>
<accession>Q9F1N8</accession>
<accession>D4ZDV1</accession>
<gene>
    <name evidence="1" type="primary">rsmH</name>
    <name type="synonym">mraW</name>
    <name type="ordered locus">SVI_4041</name>
</gene>
<feature type="chain" id="PRO_0000108701" description="Ribosomal RNA small subunit methyltransferase H">
    <location>
        <begin position="1"/>
        <end position="313"/>
    </location>
</feature>
<feature type="binding site" evidence="1">
    <location>
        <begin position="35"/>
        <end position="37"/>
    </location>
    <ligand>
        <name>S-adenosyl-L-methionine</name>
        <dbReference type="ChEBI" id="CHEBI:59789"/>
    </ligand>
</feature>
<feature type="binding site" evidence="1">
    <location>
        <position position="55"/>
    </location>
    <ligand>
        <name>S-adenosyl-L-methionine</name>
        <dbReference type="ChEBI" id="CHEBI:59789"/>
    </ligand>
</feature>
<feature type="binding site" evidence="1">
    <location>
        <position position="80"/>
    </location>
    <ligand>
        <name>S-adenosyl-L-methionine</name>
        <dbReference type="ChEBI" id="CHEBI:59789"/>
    </ligand>
</feature>
<feature type="binding site" evidence="1">
    <location>
        <position position="102"/>
    </location>
    <ligand>
        <name>S-adenosyl-L-methionine</name>
        <dbReference type="ChEBI" id="CHEBI:59789"/>
    </ligand>
</feature>
<feature type="binding site" evidence="1">
    <location>
        <position position="109"/>
    </location>
    <ligand>
        <name>S-adenosyl-L-methionine</name>
        <dbReference type="ChEBI" id="CHEBI:59789"/>
    </ligand>
</feature>